<name>YHBP_SALPK</name>
<evidence type="ECO:0000255" key="1">
    <source>
        <dbReference type="HAMAP-Rule" id="MF_00764"/>
    </source>
</evidence>
<dbReference type="EMBL" id="FM200053">
    <property type="protein sequence ID" value="CAR61179.1"/>
    <property type="molecule type" value="Genomic_DNA"/>
</dbReference>
<dbReference type="RefSeq" id="WP_000380408.1">
    <property type="nucleotide sequence ID" value="NC_011147.1"/>
</dbReference>
<dbReference type="SMR" id="B5BGI2"/>
<dbReference type="KEGG" id="sek:SSPA2931"/>
<dbReference type="HOGENOM" id="CLU_105087_3_0_6"/>
<dbReference type="Proteomes" id="UP000001869">
    <property type="component" value="Chromosome"/>
</dbReference>
<dbReference type="Gene3D" id="2.30.110.10">
    <property type="entry name" value="Electron Transport, Fmn-binding Protein, Chain A"/>
    <property type="match status" value="1"/>
</dbReference>
<dbReference type="HAMAP" id="MF_00764">
    <property type="entry name" value="UPF0306"/>
    <property type="match status" value="1"/>
</dbReference>
<dbReference type="InterPro" id="IPR012349">
    <property type="entry name" value="Split_barrel_FMN-bd"/>
</dbReference>
<dbReference type="InterPro" id="IPR011194">
    <property type="entry name" value="UPF0306"/>
</dbReference>
<dbReference type="NCBIfam" id="NF002900">
    <property type="entry name" value="PRK03467.1"/>
    <property type="match status" value="1"/>
</dbReference>
<dbReference type="PIRSF" id="PIRSF009554">
    <property type="entry name" value="UCP009554"/>
    <property type="match status" value="1"/>
</dbReference>
<dbReference type="SUPFAM" id="SSF50475">
    <property type="entry name" value="FMN-binding split barrel"/>
    <property type="match status" value="1"/>
</dbReference>
<comment type="similarity">
    <text evidence="1">Belongs to the UPF0306 family.</text>
</comment>
<gene>
    <name evidence="1" type="primary">yhbP</name>
    <name type="ordered locus">SSPA2931</name>
</gene>
<accession>B5BGI2</accession>
<organism>
    <name type="scientific">Salmonella paratyphi A (strain AKU_12601)</name>
    <dbReference type="NCBI Taxonomy" id="554290"/>
    <lineage>
        <taxon>Bacteria</taxon>
        <taxon>Pseudomonadati</taxon>
        <taxon>Pseudomonadota</taxon>
        <taxon>Gammaproteobacteria</taxon>
        <taxon>Enterobacterales</taxon>
        <taxon>Enterobacteriaceae</taxon>
        <taxon>Salmonella</taxon>
    </lineage>
</organism>
<reference key="1">
    <citation type="journal article" date="2009" name="BMC Genomics">
        <title>Pseudogene accumulation in the evolutionary histories of Salmonella enterica serovars Paratyphi A and Typhi.</title>
        <authorList>
            <person name="Holt K.E."/>
            <person name="Thomson N.R."/>
            <person name="Wain J."/>
            <person name="Langridge G.C."/>
            <person name="Hasan R."/>
            <person name="Bhutta Z.A."/>
            <person name="Quail M.A."/>
            <person name="Norbertczak H."/>
            <person name="Walker D."/>
            <person name="Simmonds M."/>
            <person name="White B."/>
            <person name="Bason N."/>
            <person name="Mungall K."/>
            <person name="Dougan G."/>
            <person name="Parkhill J."/>
        </authorList>
    </citation>
    <scope>NUCLEOTIDE SEQUENCE [LARGE SCALE GENOMIC DNA]</scope>
    <source>
        <strain>AKU_12601</strain>
    </source>
</reference>
<proteinExistence type="inferred from homology"/>
<feature type="chain" id="PRO_1000198367" description="UPF0306 protein YhbP">
    <location>
        <begin position="1"/>
        <end position="147"/>
    </location>
</feature>
<sequence>MDTLTAIGRWLAKQHVVTWCVHHEGELWCANAFYLFDAQNVALYLLTDDKTRHAQMSGACASVAGTVNGQPKTVARIRGVQFKGEIRRLEGQESDAARKAYLRRFPVARGLPAPVWEIRLDEIKFTDNTLGFGKKLHWLRDSRAQQA</sequence>
<protein>
    <recommendedName>
        <fullName evidence="1">UPF0306 protein YhbP</fullName>
    </recommendedName>
</protein>